<accession>P12487</accession>
<protein>
    <recommendedName>
        <fullName evidence="1">Envelope glycoprotein gp160</fullName>
    </recommendedName>
    <alternativeName>
        <fullName evidence="1">Env polyprotein</fullName>
    </alternativeName>
    <component>
        <recommendedName>
            <fullName evidence="1">Surface protein gp120</fullName>
            <shortName evidence="1">SU</shortName>
        </recommendedName>
        <alternativeName>
            <fullName evidence="1">Glycoprotein 120</fullName>
            <shortName evidence="1">gp120</shortName>
        </alternativeName>
    </component>
    <component>
        <recommendedName>
            <fullName evidence="1">Transmembrane protein gp41</fullName>
            <shortName evidence="1">TM</shortName>
        </recommendedName>
        <alternativeName>
            <fullName evidence="1">Glycoprotein 41</fullName>
            <shortName evidence="1">gp41</shortName>
        </alternativeName>
    </component>
</protein>
<keyword id="KW-0002">3D-structure</keyword>
<keyword id="KW-0014">AIDS</keyword>
<keyword id="KW-0053">Apoptosis</keyword>
<keyword id="KW-1165">Clathrin-mediated endocytosis of virus by host</keyword>
<keyword id="KW-0165">Cleavage on pair of basic residues</keyword>
<keyword id="KW-0175">Coiled coil</keyword>
<keyword id="KW-1015">Disulfide bond</keyword>
<keyword id="KW-1170">Fusion of virus membrane with host endosomal membrane</keyword>
<keyword id="KW-1168">Fusion of virus membrane with host membrane</keyword>
<keyword id="KW-0325">Glycoprotein</keyword>
<keyword id="KW-1032">Host cell membrane</keyword>
<keyword id="KW-1039">Host endosome</keyword>
<keyword id="KW-1043">Host membrane</keyword>
<keyword id="KW-0945">Host-virus interaction</keyword>
<keyword id="KW-0449">Lipoprotein</keyword>
<keyword id="KW-0472">Membrane</keyword>
<keyword id="KW-0564">Palmitate</keyword>
<keyword id="KW-0732">Signal</keyword>
<keyword id="KW-0812">Transmembrane</keyword>
<keyword id="KW-1133">Transmembrane helix</keyword>
<keyword id="KW-1161">Viral attachment to host cell</keyword>
<keyword id="KW-0261">Viral envelope protein</keyword>
<keyword id="KW-0899">Viral immunoevasion</keyword>
<keyword id="KW-1162">Viral penetration into host cytoplasm</keyword>
<keyword id="KW-0946">Virion</keyword>
<keyword id="KW-1164">Virus endocytosis by host</keyword>
<keyword id="KW-1160">Virus entry into host cell</keyword>
<name>ENV_HV1Z2</name>
<organismHost>
    <name type="scientific">Homo sapiens</name>
    <name type="common">Human</name>
    <dbReference type="NCBI Taxonomy" id="9606"/>
</organismHost>
<dbReference type="EMBL" id="M22639">
    <property type="protein sequence ID" value="AAA45370.1"/>
    <property type="molecule type" value="Genomic_RNA"/>
</dbReference>
<dbReference type="PIR" id="S54384">
    <property type="entry name" value="S54384"/>
</dbReference>
<dbReference type="PDB" id="3UIA">
    <property type="method" value="X-ray"/>
    <property type="resolution" value="2.00 A"/>
    <property type="chains" value="A/B/C=537-589"/>
</dbReference>
<dbReference type="PDBsum" id="3UIA"/>
<dbReference type="SMR" id="P12487"/>
<dbReference type="GlyCosmos" id="P12487">
    <property type="glycosylation" value="30 sites, No reported glycans"/>
</dbReference>
<dbReference type="Reactome" id="R-HSA-5621480">
    <property type="pathway name" value="Dectin-2 family"/>
</dbReference>
<dbReference type="EvolutionaryTrace" id="P12487"/>
<dbReference type="Proteomes" id="UP000155099">
    <property type="component" value="Genome"/>
</dbReference>
<dbReference type="GO" id="GO:0044175">
    <property type="term" value="C:host cell endosome membrane"/>
    <property type="evidence" value="ECO:0007669"/>
    <property type="project" value="UniProtKB-SubCell"/>
</dbReference>
<dbReference type="GO" id="GO:0020002">
    <property type="term" value="C:host cell plasma membrane"/>
    <property type="evidence" value="ECO:0007669"/>
    <property type="project" value="UniProtKB-SubCell"/>
</dbReference>
<dbReference type="GO" id="GO:0016020">
    <property type="term" value="C:membrane"/>
    <property type="evidence" value="ECO:0007669"/>
    <property type="project" value="UniProtKB-UniRule"/>
</dbReference>
<dbReference type="GO" id="GO:0019031">
    <property type="term" value="C:viral envelope"/>
    <property type="evidence" value="ECO:0007669"/>
    <property type="project" value="UniProtKB-KW"/>
</dbReference>
<dbReference type="GO" id="GO:0055036">
    <property type="term" value="C:virion membrane"/>
    <property type="evidence" value="ECO:0007669"/>
    <property type="project" value="UniProtKB-SubCell"/>
</dbReference>
<dbReference type="GO" id="GO:0005198">
    <property type="term" value="F:structural molecule activity"/>
    <property type="evidence" value="ECO:0007669"/>
    <property type="project" value="UniProtKB-UniRule"/>
</dbReference>
<dbReference type="GO" id="GO:0075512">
    <property type="term" value="P:clathrin-dependent endocytosis of virus by host cell"/>
    <property type="evidence" value="ECO:0007669"/>
    <property type="project" value="UniProtKB-UniRule"/>
</dbReference>
<dbReference type="GO" id="GO:0039654">
    <property type="term" value="P:fusion of virus membrane with host endosome membrane"/>
    <property type="evidence" value="ECO:0007669"/>
    <property type="project" value="UniProtKB-UniRule"/>
</dbReference>
<dbReference type="GO" id="GO:0019064">
    <property type="term" value="P:fusion of virus membrane with host plasma membrane"/>
    <property type="evidence" value="ECO:0007669"/>
    <property type="project" value="UniProtKB-UniRule"/>
</dbReference>
<dbReference type="GO" id="GO:1903908">
    <property type="term" value="P:positive regulation of plasma membrane raft polarization"/>
    <property type="evidence" value="ECO:0007669"/>
    <property type="project" value="UniProtKB-UniRule"/>
</dbReference>
<dbReference type="GO" id="GO:1903911">
    <property type="term" value="P:positive regulation of receptor clustering"/>
    <property type="evidence" value="ECO:0007669"/>
    <property type="project" value="UniProtKB-UniRule"/>
</dbReference>
<dbReference type="GO" id="GO:0019082">
    <property type="term" value="P:viral protein processing"/>
    <property type="evidence" value="ECO:0007669"/>
    <property type="project" value="UniProtKB-UniRule"/>
</dbReference>
<dbReference type="GO" id="GO:0019062">
    <property type="term" value="P:virion attachment to host cell"/>
    <property type="evidence" value="ECO:0007669"/>
    <property type="project" value="UniProtKB-UniRule"/>
</dbReference>
<dbReference type="CDD" id="cd09909">
    <property type="entry name" value="HIV-1-like_HR1-HR2"/>
    <property type="match status" value="1"/>
</dbReference>
<dbReference type="FunFam" id="1.10.287.210:FF:000001">
    <property type="entry name" value="Envelope glycoprotein gp160"/>
    <property type="match status" value="1"/>
</dbReference>
<dbReference type="FunFam" id="1.20.5.490:FF:000001">
    <property type="entry name" value="Envelope glycoprotein gp160"/>
    <property type="match status" value="1"/>
</dbReference>
<dbReference type="FunFam" id="2.170.40.20:FF:000002">
    <property type="entry name" value="Envelope glycoprotein gp160"/>
    <property type="match status" value="1"/>
</dbReference>
<dbReference type="FunFam" id="2.170.40.20:FF:000003">
    <property type="entry name" value="Envelope glycoprotein gp160"/>
    <property type="match status" value="1"/>
</dbReference>
<dbReference type="Gene3D" id="1.10.287.210">
    <property type="match status" value="1"/>
</dbReference>
<dbReference type="Gene3D" id="2.170.40.20">
    <property type="entry name" value="Human immunodeficiency virus 1, Gp160, envelope glycoprotein"/>
    <property type="match status" value="2"/>
</dbReference>
<dbReference type="Gene3D" id="1.20.5.490">
    <property type="entry name" value="Single helix bin"/>
    <property type="match status" value="1"/>
</dbReference>
<dbReference type="HAMAP" id="MF_04083">
    <property type="entry name" value="HIV_ENV"/>
    <property type="match status" value="1"/>
</dbReference>
<dbReference type="InterPro" id="IPR036377">
    <property type="entry name" value="Gp120_core_sf"/>
</dbReference>
<dbReference type="InterPro" id="IPR037527">
    <property type="entry name" value="Gp160"/>
</dbReference>
<dbReference type="InterPro" id="IPR000328">
    <property type="entry name" value="GP41-like"/>
</dbReference>
<dbReference type="InterPro" id="IPR000777">
    <property type="entry name" value="HIV1_Gp120"/>
</dbReference>
<dbReference type="Pfam" id="PF00516">
    <property type="entry name" value="GP120"/>
    <property type="match status" value="2"/>
</dbReference>
<dbReference type="Pfam" id="PF00517">
    <property type="entry name" value="GP41"/>
    <property type="match status" value="1"/>
</dbReference>
<dbReference type="SUPFAM" id="SSF56502">
    <property type="entry name" value="gp120 core"/>
    <property type="match status" value="1"/>
</dbReference>
<dbReference type="SUPFAM" id="SSF58069">
    <property type="entry name" value="Virus ectodomain"/>
    <property type="match status" value="1"/>
</dbReference>
<comment type="function">
    <molecule>Envelope glycoprotein gp160</molecule>
    <text evidence="1">Oligomerizes in the host endoplasmic reticulum into predominantly trimers. In a second time, gp160 transits in the host Golgi, where glycosylation is completed. The precursor is then proteolytically cleaved in the trans-Golgi and thereby activated by cellular furin or furin-like proteases to produce gp120 and gp41.</text>
</comment>
<comment type="function">
    <molecule>Surface protein gp120</molecule>
    <text evidence="1">Attaches the virus to the host lymphoid cell by binding to the primary receptor CD4. This interaction induces a structural rearrangement creating a high affinity binding site for a chemokine coreceptor like CXCR4 and/or CCR5. Acts as a ligand for CD209/DC-SIGN and CLEC4M/DC-SIGNR, which are respectively found on dendritic cells (DCs), and on endothelial cells of liver sinusoids and lymph node sinuses. These interactions allow capture of viral particles at mucosal surfaces by these cells and subsequent transmission to permissive cells. HIV subverts the migration properties of dendritic cells to gain access to CD4+ T-cells in lymph nodes. Virus transmission to permissive T-cells occurs either in trans (without DCs infection, through viral capture and transmission), or in cis (following DCs productive infection, through the usual CD4-gp120 interaction), thereby inducing a robust infection. In trans infection, bound virions remain infectious over days and it is proposed that they are not degraded, but protected in non-lysosomal acidic organelles within the DCs close to the cell membrane thus contributing to the viral infectious potential during DCs' migration from the periphery to the lymphoid tissues. On arrival at lymphoid tissues, intact virions recycle back to DCs' cell surface allowing virus transmission to CD4+ T-cells.</text>
</comment>
<comment type="function">
    <molecule>Transmembrane protein gp41</molecule>
    <text evidence="1">Acts as a class I viral fusion protein. Under the current model, the protein has at least 3 conformational states: pre-fusion native state, pre-hairpin intermediate state, and post-fusion hairpin state. During fusion of viral and target intracellular membranes, the coiled coil regions (heptad repeats) assume a trimer-of-hairpins structure, positioning the fusion peptide in close proximity to the C-terminal region of the ectodomain. The formation of this structure appears to drive apposition and subsequent fusion of viral and target cell membranes. Complete fusion occurs in host cell endosomes and is dynamin-dependent, however some lipid transfer might occur at the plasma membrane. The virus undergoes clathrin-dependent internalization long before endosomal fusion, thus minimizing the surface exposure of conserved viral epitopes during fusion and reducing the efficacy of inhibitors targeting these epitopes. Membranes fusion leads to delivery of the nucleocapsid into the cytoplasm.</text>
</comment>
<comment type="subunit">
    <molecule>Surface protein gp120</molecule>
    <text evidence="1">The mature envelope protein (Env) consists of a homotrimer of non-covalently associated gp120-gp41 heterodimers. The resulting complex protrudes from the virus surface as a spike. There seems to be as few as 10 spikes on the average virion. Interacts with host CD4, CCR5 and CXCR4. Gp120 also interacts with the C-type lectins CD209/DC-SIGN and CLEC4M/DC-SIGNR (collectively referred to as DC-SIGN(R)). Gp120 and gp41 interact with GalCer. Gp120 interacts with host ITGA4/ITGB7 complex; on CD4+ T-cells, this interaction results in rapid activation of integrin ITGAL/LFA-1, which facilitates efficient cell-to-cell spreading of HIV-1. Gp120 interacts with cell-associated heparan sulfate; this interaction increases virus infectivity on permissive cells and may be involved in infection of CD4- cells.</text>
</comment>
<comment type="subunit">
    <molecule>Transmembrane protein gp41</molecule>
    <text evidence="1">The mature envelope protein (Env) consists of a homotrimer of non-covalently associated gp120-gp41 heterodimers. The resulting complex protrudes from the virus surface as a spike. There seems to be as few as 10 spikes on the average virion.</text>
</comment>
<comment type="subcellular location">
    <molecule>Surface protein gp120</molecule>
    <subcellularLocation>
        <location evidence="1">Virion membrane</location>
        <topology evidence="1">Peripheral membrane protein</topology>
    </subcellularLocation>
    <subcellularLocation>
        <location evidence="1">Host cell membrane</location>
        <topology evidence="1">Peripheral membrane protein</topology>
    </subcellularLocation>
    <subcellularLocation>
        <location evidence="1">Host endosome membrane</location>
        <topology evidence="1">Single-pass type I membrane protein</topology>
    </subcellularLocation>
    <text evidence="1">The surface protein is not anchored to the viral envelope, but associates with the extravirion surface through its binding to TM. It is probably concentrated at the site of budding and incorporated into the virions possibly by contacts between the cytoplasmic tail of Env and the N-terminus of Gag.</text>
</comment>
<comment type="subcellular location">
    <molecule>Transmembrane protein gp41</molecule>
    <subcellularLocation>
        <location evidence="1">Virion membrane</location>
        <topology evidence="1">Single-pass type I membrane protein</topology>
    </subcellularLocation>
    <subcellularLocation>
        <location evidence="1">Host cell membrane</location>
        <topology evidence="1">Single-pass type I membrane protein</topology>
    </subcellularLocation>
    <subcellularLocation>
        <location evidence="1">Host endosome membrane</location>
        <topology evidence="1">Single-pass type I membrane protein</topology>
    </subcellularLocation>
    <text evidence="1">It is probably concentrated at the site of budding and incorporated into the virions possibly by contacts between the cytoplasmic tail of Env and the N-terminus of Gag.</text>
</comment>
<comment type="domain">
    <text evidence="1">Some of the most genetically diverse regions of the viral genome are present in Env. They are called variable regions 1 through 5 (V1 through V5). Coreceptor usage of gp120 is determined mainly by the primary structure of the third variable region (V3) in the outer domain of gp120. The sequence of V3 determines which coreceptor, CCR5 and/or CXCR4 (corresponding to R5/macrophage, X4/T cell and R5X4/T cell and macrophage tropism), is used to trigger the fusion potential of the Env complex, and hence which cells the virus can infect. Binding to CCR5 involves a region adjacent in addition to V3.</text>
</comment>
<comment type="domain">
    <text evidence="1">The membrane proximal external region (MPER) present in gp41 is a tryptophan-rich region recognized by the antibodies 2F5, Z13, and 4E10. MPER seems to play a role in fusion.</text>
</comment>
<comment type="domain">
    <text evidence="1">The 17 amino acids long immunosuppressive region is present in many retroviral envelope proteins. Synthetic peptides derived from this relatively conserved sequence inhibit immune function in vitro and in vivo.</text>
</comment>
<comment type="domain">
    <text evidence="1">The YXXL motif is involved in determining the exact site of viral release at the surface of infected mononuclear cells and promotes endocytosis. YXXL and di-leucine endocytosis motifs interact directly or indirectly with the clathrin adapter complexes, opperate independently, and their activities are not additive.</text>
</comment>
<comment type="domain">
    <text evidence="1">The CD4-binding region is targeted by the antibody b12.</text>
</comment>
<comment type="PTM">
    <text evidence="1">Highly glycosylated by host. The high number of glycan on the protein is reffered to as 'glycan shield' because it contributes to hide protein sequence from adaptive immune system.</text>
</comment>
<comment type="PTM">
    <text evidence="1">Palmitoylation of the transmembrane protein and of Env polyprotein (prior to its proteolytic cleavage) is essential for their association with host cell membrane lipid rafts. Palmitoylation is therefore required for envelope trafficking to classical lipid rafts, but not for viral replication.</text>
</comment>
<comment type="PTM">
    <text evidence="1">Specific enzymatic cleavages in vivo yield mature proteins. Envelope glycoproteins are synthesized as an inactive precursor that is heavily N-glycosylated and processed likely by host cell furin in the Golgi to yield the mature SU and TM proteins. The cleavage site between SU and TM requires the minimal sequence [KR]-X-[KR]-R. About 2 of the 9 disulfide bonds of gp41 are reduced by P4HB/PDI, following binding to CD4 receptor.</text>
</comment>
<comment type="miscellaneous">
    <text evidence="1">Inhibitors targeting HIV-1 viral envelope proteins are used as antiretroviral drugs. Attachment of virions to the cell surface via non-specific interactions and CD4 binding can be blocked by inhibitors that include cyanovirin-N, cyclotriazadisulfonamide analogs, PRO 2000, TNX 355 and PRO 542. In addition, BMS 806 can block CD4-induced conformational changes. Env interactions with the coreceptor molecules can be targeted by CCR5 antagonists including SCH-D, maraviroc (UK 427857) and aplaviroc (GW 873140), and the CXCR4 antagonist AMD 070. Fusion of viral and cellular membranes can be inhibited by peptides such as enfuvirtide and tifuvirtide (T 1249). Resistance to inhibitors associated with mutations in Env are observed. Most of the time, single mutations confer only a modest reduction in drug susceptibility. Combination of several mutations is usually required to develop a high-level drug resistance.</text>
</comment>
<comment type="miscellaneous">
    <text evidence="1">HIV-1 lineages are divided in three main groups, M (for Major), O (for Outlier), and N (for New, or Non-M, Non-O). The vast majority of strains found worldwide belong to the group M. Group O seems to be endemic to and largely confined to Cameroon and neighboring countries in West Central Africa, where these viruses represent a small minority of HIV-1 strains. The group N is represented by a limited number of isolates from Cameroonian persons. The group M is further subdivided in 9 clades or subtypes (A to D, F to H, J and K).</text>
</comment>
<comment type="similarity">
    <text evidence="1">Belongs to the HIV-1 env protein family.</text>
</comment>
<comment type="online information" name="hivdb">
    <link uri="https://hivdb.stanford.edu"/>
    <text>HIV drug resistance database</text>
</comment>
<comment type="online information" name="HIV drug resistance mutations">
    <link uri="https://www.iasusa.org/hiv-drug-resistance/hiv-drug-resistance-mutations/"/>
</comment>
<evidence type="ECO:0000255" key="1">
    <source>
        <dbReference type="HAMAP-Rule" id="MF_04083"/>
    </source>
</evidence>
<evidence type="ECO:0007829" key="2">
    <source>
        <dbReference type="PDB" id="3UIA"/>
    </source>
</evidence>
<gene>
    <name evidence="1" type="primary">env</name>
</gene>
<proteinExistence type="evidence at protein level"/>
<feature type="signal peptide" evidence="1">
    <location>
        <begin position="1"/>
        <end position="31"/>
    </location>
</feature>
<feature type="chain" id="PRO_0000239471" description="Envelope glycoprotein gp160" evidence="1">
    <location>
        <begin position="32"/>
        <end position="853"/>
    </location>
</feature>
<feature type="chain" id="PRO_0000038382" description="Surface protein gp120" evidence="1">
    <location>
        <begin position="32"/>
        <end position="508"/>
    </location>
</feature>
<feature type="chain" id="PRO_0000038383" description="Transmembrane protein gp41" evidence="1">
    <location>
        <begin position="509"/>
        <end position="853"/>
    </location>
</feature>
<feature type="topological domain" description="Extracellular" evidence="1">
    <location>
        <begin position="32"/>
        <end position="681"/>
    </location>
</feature>
<feature type="transmembrane region" description="Helical" evidence="1">
    <location>
        <begin position="682"/>
        <end position="702"/>
    </location>
</feature>
<feature type="topological domain" description="Cytoplasmic" evidence="1">
    <location>
        <begin position="703"/>
        <end position="853"/>
    </location>
</feature>
<feature type="region of interest" description="V1" evidence="1">
    <location>
        <begin position="130"/>
        <end position="153"/>
    </location>
</feature>
<feature type="region of interest" description="V2" evidence="1">
    <location>
        <begin position="154"/>
        <end position="197"/>
    </location>
</feature>
<feature type="region of interest" description="V3" evidence="1">
    <location>
        <begin position="297"/>
        <end position="329"/>
    </location>
</feature>
<feature type="region of interest" description="CD4-binding loop" evidence="1">
    <location>
        <begin position="362"/>
        <end position="372"/>
    </location>
</feature>
<feature type="region of interest" description="V4" evidence="1">
    <location>
        <begin position="383"/>
        <end position="415"/>
    </location>
</feature>
<feature type="region of interest" description="V5">
    <location>
        <begin position="457"/>
        <end position="468"/>
    </location>
</feature>
<feature type="region of interest" description="V5" evidence="1">
    <location>
        <begin position="460"/>
        <end position="468"/>
    </location>
</feature>
<feature type="region of interest" description="Fusion peptide" evidence="1">
    <location>
        <begin position="509"/>
        <end position="529"/>
    </location>
</feature>
<feature type="region of interest" description="Immunosuppression" evidence="1">
    <location>
        <begin position="571"/>
        <end position="589"/>
    </location>
</feature>
<feature type="region of interest" description="MPER; binding to GalCer" evidence="1">
    <location>
        <begin position="659"/>
        <end position="680"/>
    </location>
</feature>
<feature type="coiled-coil region" evidence="1">
    <location>
        <begin position="630"/>
        <end position="664"/>
    </location>
</feature>
<feature type="short sequence motif" description="YXXL motif; contains endocytosis signal" evidence="1">
    <location>
        <begin position="709"/>
        <end position="712"/>
    </location>
</feature>
<feature type="short sequence motif" description="Di-leucine internalization motif" evidence="1">
    <location>
        <begin position="852"/>
        <end position="853"/>
    </location>
</feature>
<feature type="site" description="Cleavage; by host furin" evidence="1">
    <location>
        <begin position="508"/>
        <end position="509"/>
    </location>
</feature>
<feature type="lipid moiety-binding region" description="S-palmitoyl cysteine; by host" evidence="1">
    <location>
        <position position="761"/>
    </location>
</feature>
<feature type="lipid moiety-binding region" description="S-palmitoyl cysteine; by host" evidence="1">
    <location>
        <position position="834"/>
    </location>
</feature>
<feature type="glycosylation site" description="N-linked (GlcNAc...) asparagine; by host" evidence="1">
    <location>
        <position position="87"/>
    </location>
</feature>
<feature type="glycosylation site" description="N-linked (GlcNAc...) asparagine; by host" evidence="1">
    <location>
        <position position="137"/>
    </location>
</feature>
<feature type="glycosylation site" description="N-linked (GlcNAc...) asparagine; by host" evidence="1">
    <location>
        <position position="144"/>
    </location>
</feature>
<feature type="glycosylation site" description="N-linked (GlcNAc...) asparagine; by host" evidence="1">
    <location>
        <position position="153"/>
    </location>
</feature>
<feature type="glycosylation site" description="N-linked (GlcNAc...) asparagine; by host" evidence="1">
    <location>
        <position position="157"/>
    </location>
</feature>
<feature type="glycosylation site" description="N-linked (GlcNAc...) asparagine; by host" evidence="1">
    <location>
        <position position="185"/>
    </location>
</feature>
<feature type="glycosylation site" description="N-linked (GlcNAc...) asparagine; by host" evidence="1">
    <location>
        <position position="188"/>
    </location>
</feature>
<feature type="glycosylation site" description="N-linked (GlcNAc...) asparagine; by host" evidence="1">
    <location>
        <position position="198"/>
    </location>
</feature>
<feature type="glycosylation site" description="N-linked (GlcNAc...) asparagine; by host" evidence="1">
    <location>
        <position position="235"/>
    </location>
</feature>
<feature type="glycosylation site" description="N-linked (GlcNAc...) asparagine; by host" evidence="1">
    <location>
        <position position="242"/>
    </location>
</feature>
<feature type="glycosylation site" description="N-linked (GlcNAc...) asparagine; by host" evidence="1">
    <location>
        <position position="263"/>
    </location>
</feature>
<feature type="glycosylation site" description="N-linked (GlcNAc...) asparagine; by host" evidence="1">
    <location>
        <position position="277"/>
    </location>
</feature>
<feature type="glycosylation site" description="N-linked (GlcNAc...) asparagine; by host" evidence="1">
    <location>
        <position position="290"/>
    </location>
</feature>
<feature type="glycosylation site" description="N-linked (GlcNAc...) asparagine; by host" evidence="1">
    <location>
        <position position="296"/>
    </location>
</feature>
<feature type="glycosylation site" description="N-linked (GlcNAc...) asparagine; by host" evidence="1">
    <location>
        <position position="331"/>
    </location>
</feature>
<feature type="glycosylation site" description="N-linked (GlcNAc...) asparagine; by host" evidence="1">
    <location>
        <position position="338"/>
    </location>
</feature>
<feature type="glycosylation site" description="N-linked (GlcNAc...) asparagine; by host" evidence="1">
    <location>
        <position position="353"/>
    </location>
</feature>
<feature type="glycosylation site" description="N-linked (GlcNAc...) asparagine; by host" evidence="1">
    <location>
        <position position="384"/>
    </location>
</feature>
<feature type="glycosylation site" description="N-linked (GlcNAc...) asparagine; by host" evidence="1">
    <location>
        <position position="390"/>
    </location>
</feature>
<feature type="glycosylation site" description="N-linked (GlcNAc...) asparagine; by host" evidence="1">
    <location>
        <position position="402"/>
    </location>
</feature>
<feature type="glycosylation site" description="N-linked (GlcNAc...) asparagine; by host" evidence="1">
    <location>
        <position position="441"/>
    </location>
</feature>
<feature type="glycosylation site" description="N-linked (GlcNAc...) asparagine; by host" evidence="1">
    <location>
        <position position="445"/>
    </location>
</feature>
<feature type="glycosylation site" description="N-linked (GlcNAc...) asparagine; by host" evidence="1">
    <location>
        <position position="458"/>
    </location>
</feature>
<feature type="glycosylation site" description="N-linked (GlcNAc...) asparagine; by host" evidence="1">
    <location>
        <position position="459"/>
    </location>
</feature>
<feature type="glycosylation site" description="N-linked (GlcNAc...) asparagine; by host" evidence="1">
    <location>
        <position position="462"/>
    </location>
</feature>
<feature type="glycosylation site" description="N-linked (GlcNAc...) asparagine; by host" evidence="1">
    <location>
        <position position="608"/>
    </location>
</feature>
<feature type="glycosylation site" description="N-linked (GlcNAc...) asparagine; by host" evidence="1">
    <location>
        <position position="613"/>
    </location>
</feature>
<feature type="glycosylation site" description="N-linked (GlcNAc...) asparagine; by host" evidence="1">
    <location>
        <position position="622"/>
    </location>
</feature>
<feature type="glycosylation site" description="N-linked (GlcNAc...) asparagine; by host" evidence="1">
    <location>
        <position position="634"/>
    </location>
</feature>
<feature type="glycosylation site" description="N-linked (GlcNAc...) asparagine; by host" evidence="1">
    <location>
        <position position="671"/>
    </location>
</feature>
<feature type="disulfide bond" evidence="1">
    <location>
        <begin position="53"/>
        <end position="73"/>
    </location>
</feature>
<feature type="disulfide bond" evidence="1">
    <location>
        <begin position="118"/>
        <end position="206"/>
    </location>
</feature>
<feature type="disulfide bond" evidence="1">
    <location>
        <begin position="125"/>
        <end position="197"/>
    </location>
</feature>
<feature type="disulfide bond" evidence="1">
    <location>
        <begin position="130"/>
        <end position="154"/>
    </location>
</feature>
<feature type="disulfide bond" evidence="1">
    <location>
        <begin position="219"/>
        <end position="248"/>
    </location>
</feature>
<feature type="disulfide bond" evidence="1">
    <location>
        <begin position="229"/>
        <end position="240"/>
    </location>
</feature>
<feature type="disulfide bond" evidence="1">
    <location>
        <begin position="297"/>
        <end position="330"/>
    </location>
</feature>
<feature type="disulfide bond" evidence="1">
    <location>
        <begin position="376"/>
        <end position="442"/>
    </location>
</feature>
<feature type="disulfide bond" evidence="1">
    <location>
        <begin position="383"/>
        <end position="415"/>
    </location>
</feature>
<feature type="disulfide bond" evidence="1">
    <location>
        <begin position="595"/>
        <end position="601"/>
    </location>
</feature>
<feature type="helix" evidence="2">
    <location>
        <begin position="538"/>
        <end position="587"/>
    </location>
</feature>
<sequence length="853" mass="97044">MRVRGIERNCQNLWKWGIMLLGILMTCSNADNLWVTVYYGVPVWKEATTTLFCASDAKSYKTEAHNIWATHACVPTDPNPQEIELENVTENFNMWRNNMVEQMHEDIISLWDQSLKPCVKLTPLCVTLNCIDEVMENVTMKNNNVTEEIRMKNCSFNITTVVRDKTKQVHALFYRLDIVPIDNDNSTNSTNYRLINCNTSAITQACPKVSFEPIPIHYCAPAGFAILKCRDKRFNGTGPCTNVSTVQCTHGIRPVVSTQLLLNGSLAEEEIIIRSENLTNNAKIIIVQLNESVAINCTRPYRNIRQRTSIGLGQALYTTKTRSIIGQAYCNISKNEWNKTLQQVAIKLGNLLNKTTIIFKPSSGGDPEITTHSFNCGGEFFYCNTSGLFNSTWDISKSEWANSTESDDKPITLQCRIKQIINMWQGVGKAMYAPPIEGQINCSSNITGLLLTRDGGTNNSSNETFRPGGGDMRDNWRSELYKYKVVKIEPLGVAPTRAKRRVVEREKRAIGLGAMFLGFLGAAGSTMGARSLTLTVQARQLLSGIVQQQNNLLRAIEAQQHLLQLTVWGIKQLQARILAVERYLKDQQLLGIWGCSGKLICTTTVPWNSSWSNRSLNDIWQNMTWMEWEREIDNYTGLIYRLIEESQTQQEKNEQELLELDKWASLWNWFNITQWLWYIKIFIMIVGGLIGLRIVFAVLSLVNRVRQGYSPLSFQTLLPAPRGPDRPEGIEEEGGERGRDRSIRLVNGFSALIWDDLRNLCLFSYHRLRDLILIAARIVELLGRRGWEALKYLWNLLQYWSRELKNSASSLLDTIAIAVAEGTDRVIEIVRRACRAVLHIPTRIRQGLERLLL</sequence>
<reference key="1">
    <citation type="submission" date="1989-07" db="EMBL/GenBank/DDBJ databases">
        <authorList>
            <person name="Theodore T."/>
            <person name="Buckler-White A.J."/>
        </authorList>
    </citation>
    <scope>NUCLEOTIDE SEQUENCE [GENOMIC RNA]</scope>
</reference>
<reference key="2">
    <citation type="journal article" date="2003" name="APMIS">
        <title>Pathogens target DC-SIGN to influence their fate DC-SIGN functions as a pathogen receptor with broad specificity.</title>
        <authorList>
            <person name="Geijtenbeek T.B."/>
            <person name="van Kooyk Y."/>
        </authorList>
    </citation>
    <scope>REVIEW</scope>
</reference>
<reference key="3">
    <citation type="journal article" date="2003" name="Biochim. Biophys. Acta">
        <title>The HIV Env-mediated fusion reaction.</title>
        <authorList>
            <person name="Gallo S.A."/>
            <person name="Finnegan C.M."/>
            <person name="Viard M."/>
            <person name="Raviv Y."/>
            <person name="Dimitrov A."/>
            <person name="Rawat S.S."/>
            <person name="Puri A."/>
            <person name="Durell S."/>
            <person name="Blumenthal R."/>
        </authorList>
    </citation>
    <scope>REVIEW</scope>
</reference>
<reference key="4">
    <citation type="journal article" date="2005" name="Cell Death Differ.">
        <title>Mechanisms of apoptosis induction by the HIV-1 envelope.</title>
        <authorList>
            <person name="Perfettini J.-L."/>
            <person name="Castedo M."/>
            <person name="Roumier T."/>
            <person name="Andreau K."/>
            <person name="Nardacci R."/>
            <person name="Piacentini M."/>
            <person name="Kroemer G."/>
        </authorList>
    </citation>
    <scope>REVIEW</scope>
</reference>
<reference key="5">
    <citation type="journal article" date="2005" name="AIDS Res. Hum. Retroviruses">
        <title>V3: HIV's switch-hitter.</title>
        <authorList>
            <person name="Hartley O."/>
            <person name="Klasse P.J."/>
            <person name="Sattentau Q.J."/>
            <person name="Moore J.P."/>
        </authorList>
    </citation>
    <scope>REVIEW</scope>
</reference>
<reference key="6">
    <citation type="journal article" date="2005" name="Drugs">
        <title>Emerging drug targets for antiretroviral therapy.</title>
        <authorList>
            <person name="Reeves J.D."/>
            <person name="Piefer A.J."/>
        </authorList>
    </citation>
    <scope>REVIEW</scope>
</reference>
<reference key="7">
    <citation type="journal article" date="2006" name="EMBO J.">
        <title>HIV and the chemokine system: 10 years later.</title>
        <authorList>
            <person name="Lusso P."/>
        </authorList>
    </citation>
    <scope>REVIEW</scope>
</reference>
<organism>
    <name type="scientific">Human immunodeficiency virus type 1 group M subtype D (isolate Z2/CDC-Z34)</name>
    <name type="common">HIV-1</name>
    <dbReference type="NCBI Taxonomy" id="11683"/>
    <lineage>
        <taxon>Viruses</taxon>
        <taxon>Riboviria</taxon>
        <taxon>Pararnavirae</taxon>
        <taxon>Artverviricota</taxon>
        <taxon>Revtraviricetes</taxon>
        <taxon>Ortervirales</taxon>
        <taxon>Retroviridae</taxon>
        <taxon>Orthoretrovirinae</taxon>
        <taxon>Lentivirus</taxon>
        <taxon>Human immunodeficiency virus type 1</taxon>
    </lineage>
</organism>